<proteinExistence type="inferred from homology"/>
<reference key="1">
    <citation type="journal article" date="2002" name="Science">
        <title>50 million years of genomic stasis in endosymbiotic bacteria.</title>
        <authorList>
            <person name="Tamas I."/>
            <person name="Klasson L."/>
            <person name="Canbaeck B."/>
            <person name="Naeslund A.K."/>
            <person name="Eriksson A.-S."/>
            <person name="Wernegreen J.J."/>
            <person name="Sandstroem J.P."/>
            <person name="Moran N.A."/>
            <person name="Andersson S.G.E."/>
        </authorList>
    </citation>
    <scope>NUCLEOTIDE SEQUENCE [LARGE SCALE GENOMIC DNA]</scope>
    <source>
        <strain>Sg</strain>
    </source>
</reference>
<sequence>MINEKIWHEKLHRHVGQYFSIDKILYQKKNKYHDIIIFQNSIMGRIMAIDGVVQTTEKDEFIYHEMLTHVPIFYHGLIKNVLIVGGGDGGILREICRHKSIENITMVEIDLNIIDLCKQFFPKHNNNAYKDPRLKIVIDNGLNFVQKTKEKFDLIISDSTDPIGCGKDLFLSDFYFHCKNCLVKNGIFVGQNGVFFLQKNDINQSYKNLKKNFHDVSFYQATIPSYYGGTMMFSWGTDNIDFRQINIKNLEKRIKDKKLTFNYYNSNIHISSFYLPQYIINTLDKS</sequence>
<comment type="function">
    <text evidence="1">Catalyzes the irreversible transfer of a propylamine group from the amino donor S-adenosylmethioninamine (decarboxy-AdoMet) to putrescine (1,4-diaminobutane) to yield spermidine.</text>
</comment>
<comment type="catalytic activity">
    <reaction evidence="1">
        <text>S-adenosyl 3-(methylsulfanyl)propylamine + putrescine = S-methyl-5'-thioadenosine + spermidine + H(+)</text>
        <dbReference type="Rhea" id="RHEA:12721"/>
        <dbReference type="ChEBI" id="CHEBI:15378"/>
        <dbReference type="ChEBI" id="CHEBI:17509"/>
        <dbReference type="ChEBI" id="CHEBI:57443"/>
        <dbReference type="ChEBI" id="CHEBI:57834"/>
        <dbReference type="ChEBI" id="CHEBI:326268"/>
        <dbReference type="EC" id="2.5.1.16"/>
    </reaction>
</comment>
<comment type="pathway">
    <text evidence="1">Amine and polyamine biosynthesis; spermidine biosynthesis; spermidine from putrescine: step 1/1.</text>
</comment>
<comment type="subunit">
    <text evidence="1">Homodimer or homotetramer.</text>
</comment>
<comment type="subcellular location">
    <subcellularLocation>
        <location evidence="1">Cytoplasm</location>
    </subcellularLocation>
</comment>
<comment type="similarity">
    <text evidence="1">Belongs to the spermidine/spermine synthase family.</text>
</comment>
<dbReference type="EC" id="2.5.1.16" evidence="1"/>
<dbReference type="EMBL" id="AE013218">
    <property type="protein sequence ID" value="AAM67767.1"/>
    <property type="molecule type" value="Genomic_DNA"/>
</dbReference>
<dbReference type="RefSeq" id="WP_011053734.1">
    <property type="nucleotide sequence ID" value="NC_004061.1"/>
</dbReference>
<dbReference type="SMR" id="Q8K9T5"/>
<dbReference type="STRING" id="198804.BUsg_203"/>
<dbReference type="GeneID" id="93003670"/>
<dbReference type="KEGG" id="bas:BUsg_203"/>
<dbReference type="eggNOG" id="COG0421">
    <property type="taxonomic scope" value="Bacteria"/>
</dbReference>
<dbReference type="HOGENOM" id="CLU_048199_1_0_6"/>
<dbReference type="UniPathway" id="UPA00248">
    <property type="reaction ID" value="UER00314"/>
</dbReference>
<dbReference type="Proteomes" id="UP000000416">
    <property type="component" value="Chromosome"/>
</dbReference>
<dbReference type="GO" id="GO:0005829">
    <property type="term" value="C:cytosol"/>
    <property type="evidence" value="ECO:0007669"/>
    <property type="project" value="TreeGrafter"/>
</dbReference>
<dbReference type="GO" id="GO:0004766">
    <property type="term" value="F:spermidine synthase activity"/>
    <property type="evidence" value="ECO:0007669"/>
    <property type="project" value="UniProtKB-UniRule"/>
</dbReference>
<dbReference type="GO" id="GO:0008295">
    <property type="term" value="P:spermidine biosynthetic process"/>
    <property type="evidence" value="ECO:0007669"/>
    <property type="project" value="UniProtKB-UniRule"/>
</dbReference>
<dbReference type="CDD" id="cd02440">
    <property type="entry name" value="AdoMet_MTases"/>
    <property type="match status" value="1"/>
</dbReference>
<dbReference type="Gene3D" id="2.30.140.10">
    <property type="entry name" value="Spermidine synthase, tetramerisation domain"/>
    <property type="match status" value="1"/>
</dbReference>
<dbReference type="Gene3D" id="3.40.50.150">
    <property type="entry name" value="Vaccinia Virus protein VP39"/>
    <property type="match status" value="1"/>
</dbReference>
<dbReference type="HAMAP" id="MF_00198">
    <property type="entry name" value="Spermidine_synth"/>
    <property type="match status" value="1"/>
</dbReference>
<dbReference type="InterPro" id="IPR030374">
    <property type="entry name" value="PABS"/>
</dbReference>
<dbReference type="InterPro" id="IPR030373">
    <property type="entry name" value="PABS_CS"/>
</dbReference>
<dbReference type="InterPro" id="IPR029063">
    <property type="entry name" value="SAM-dependent_MTases_sf"/>
</dbReference>
<dbReference type="InterPro" id="IPR001045">
    <property type="entry name" value="Spermi_synthase"/>
</dbReference>
<dbReference type="InterPro" id="IPR035246">
    <property type="entry name" value="Spermidine_synt_N"/>
</dbReference>
<dbReference type="InterPro" id="IPR037163">
    <property type="entry name" value="Spermidine_synt_N_sf"/>
</dbReference>
<dbReference type="NCBIfam" id="NF002010">
    <property type="entry name" value="PRK00811.1"/>
    <property type="match status" value="1"/>
</dbReference>
<dbReference type="NCBIfam" id="TIGR00417">
    <property type="entry name" value="speE"/>
    <property type="match status" value="1"/>
</dbReference>
<dbReference type="PANTHER" id="PTHR11558:SF11">
    <property type="entry name" value="SPERMIDINE SYNTHASE"/>
    <property type="match status" value="1"/>
</dbReference>
<dbReference type="PANTHER" id="PTHR11558">
    <property type="entry name" value="SPERMIDINE/SPERMINE SYNTHASE"/>
    <property type="match status" value="1"/>
</dbReference>
<dbReference type="Pfam" id="PF17284">
    <property type="entry name" value="Spermine_synt_N"/>
    <property type="match status" value="1"/>
</dbReference>
<dbReference type="Pfam" id="PF01564">
    <property type="entry name" value="Spermine_synth"/>
    <property type="match status" value="1"/>
</dbReference>
<dbReference type="SUPFAM" id="SSF53335">
    <property type="entry name" value="S-adenosyl-L-methionine-dependent methyltransferases"/>
    <property type="match status" value="1"/>
</dbReference>
<dbReference type="PROSITE" id="PS01330">
    <property type="entry name" value="PABS_1"/>
    <property type="match status" value="1"/>
</dbReference>
<dbReference type="PROSITE" id="PS51006">
    <property type="entry name" value="PABS_2"/>
    <property type="match status" value="1"/>
</dbReference>
<evidence type="ECO:0000255" key="1">
    <source>
        <dbReference type="HAMAP-Rule" id="MF_00198"/>
    </source>
</evidence>
<gene>
    <name evidence="1" type="primary">speE</name>
    <name type="ordered locus">BUsg_203</name>
</gene>
<name>SPEE_BUCAP</name>
<protein>
    <recommendedName>
        <fullName evidence="1">Polyamine aminopropyltransferase</fullName>
    </recommendedName>
    <alternativeName>
        <fullName evidence="1">Putrescine aminopropyltransferase</fullName>
        <shortName evidence="1">PAPT</shortName>
    </alternativeName>
    <alternativeName>
        <fullName evidence="1">Spermidine synthase</fullName>
        <shortName evidence="1">SPDS</shortName>
        <shortName evidence="1">SPDSY</shortName>
        <ecNumber evidence="1">2.5.1.16</ecNumber>
    </alternativeName>
</protein>
<accession>Q8K9T5</accession>
<keyword id="KW-0963">Cytoplasm</keyword>
<keyword id="KW-0620">Polyamine biosynthesis</keyword>
<keyword id="KW-0745">Spermidine biosynthesis</keyword>
<keyword id="KW-0808">Transferase</keyword>
<organism>
    <name type="scientific">Buchnera aphidicola subsp. Schizaphis graminum (strain Sg)</name>
    <dbReference type="NCBI Taxonomy" id="198804"/>
    <lineage>
        <taxon>Bacteria</taxon>
        <taxon>Pseudomonadati</taxon>
        <taxon>Pseudomonadota</taxon>
        <taxon>Gammaproteobacteria</taxon>
        <taxon>Enterobacterales</taxon>
        <taxon>Erwiniaceae</taxon>
        <taxon>Buchnera</taxon>
    </lineage>
</organism>
<feature type="chain" id="PRO_0000156473" description="Polyamine aminopropyltransferase">
    <location>
        <begin position="1"/>
        <end position="286"/>
    </location>
</feature>
<feature type="domain" description="PABS" evidence="1">
    <location>
        <begin position="5"/>
        <end position="238"/>
    </location>
</feature>
<feature type="active site" description="Proton acceptor" evidence="1">
    <location>
        <position position="158"/>
    </location>
</feature>
<feature type="binding site" evidence="1">
    <location>
        <position position="64"/>
    </location>
    <ligand>
        <name>spermidine</name>
        <dbReference type="ChEBI" id="CHEBI:57834"/>
    </ligand>
</feature>
<feature type="binding site" evidence="1">
    <location>
        <position position="88"/>
    </location>
    <ligand>
        <name>spermidine</name>
        <dbReference type="ChEBI" id="CHEBI:57834"/>
    </ligand>
</feature>
<feature type="binding site" evidence="1">
    <location>
        <position position="108"/>
    </location>
    <ligand>
        <name>S-methyl-5'-thioadenosine</name>
        <dbReference type="ChEBI" id="CHEBI:17509"/>
    </ligand>
</feature>
<feature type="binding site" evidence="1">
    <location>
        <begin position="140"/>
        <end position="141"/>
    </location>
    <ligand>
        <name>S-methyl-5'-thioadenosine</name>
        <dbReference type="ChEBI" id="CHEBI:17509"/>
    </ligand>
</feature>
<feature type="binding site" evidence="1">
    <location>
        <begin position="158"/>
        <end position="161"/>
    </location>
    <ligand>
        <name>spermidine</name>
        <dbReference type="ChEBI" id="CHEBI:57834"/>
    </ligand>
</feature>